<comment type="function">
    <text evidence="1">Required for centriole duplication. Inhibition of centriole duplication leading to defects in cytokinesis (By similarity).</text>
</comment>
<comment type="subunit">
    <text evidence="1">Interacts with LYST.</text>
</comment>
<comment type="subcellular location">
    <subcellularLocation>
        <location evidence="1">Cytoplasm</location>
        <location evidence="1">Cytoskeleton</location>
        <location evidence="1">Microtubule organizing center</location>
        <location evidence="1">Centrosome</location>
        <location evidence="1">Centriole</location>
    </subcellularLocation>
    <text evidence="1">Centriole-associated, asymmetrically localizes to the daughter centriole.</text>
</comment>
<comment type="alternative products">
    <event type="alternative splicing"/>
    <isoform>
        <id>Q8CB62-1</id>
        <name>1</name>
        <sequence type="displayed"/>
    </isoform>
    <isoform>
        <id>Q8CB62-2</id>
        <name>2</name>
        <sequence type="described" ref="VSP_016842"/>
    </isoform>
</comment>
<comment type="sequence caution" evidence="6">
    <conflict type="erroneous initiation">
        <sequence resource="EMBL-CDS" id="AAH58512"/>
    </conflict>
</comment>
<proteinExistence type="evidence at transcript level"/>
<evidence type="ECO:0000250" key="1"/>
<evidence type="ECO:0000250" key="2">
    <source>
        <dbReference type="UniProtKB" id="Q8N137"/>
    </source>
</evidence>
<evidence type="ECO:0000255" key="3"/>
<evidence type="ECO:0000256" key="4">
    <source>
        <dbReference type="SAM" id="MobiDB-lite"/>
    </source>
</evidence>
<evidence type="ECO:0000303" key="5">
    <source>
    </source>
</evidence>
<evidence type="ECO:0000305" key="6"/>
<gene>
    <name type="primary">Cntrob</name>
    <name type="synonym">Lip8</name>
</gene>
<dbReference type="EMBL" id="AK036710">
    <property type="protein sequence ID" value="BAC29545.1"/>
    <property type="molecule type" value="mRNA"/>
</dbReference>
<dbReference type="EMBL" id="AL645527">
    <property type="status" value="NOT_ANNOTATED_CDS"/>
    <property type="molecule type" value="Genomic_DNA"/>
</dbReference>
<dbReference type="EMBL" id="BC058512">
    <property type="protein sequence ID" value="AAH58512.1"/>
    <property type="status" value="ALT_INIT"/>
    <property type="molecule type" value="mRNA"/>
</dbReference>
<dbReference type="CCDS" id="CCDS24888.2">
    <molecule id="Q8CB62-1"/>
</dbReference>
<dbReference type="RefSeq" id="NP_766148.2">
    <molecule id="Q8CB62-1"/>
    <property type="nucleotide sequence ID" value="NM_172560.3"/>
</dbReference>
<dbReference type="SMR" id="Q8CB62"/>
<dbReference type="FunCoup" id="Q8CB62">
    <property type="interactions" value="1165"/>
</dbReference>
<dbReference type="STRING" id="10090.ENSMUSP00000090651"/>
<dbReference type="iPTMnet" id="Q8CB62"/>
<dbReference type="PhosphoSitePlus" id="Q8CB62"/>
<dbReference type="jPOST" id="Q8CB62"/>
<dbReference type="PaxDb" id="10090-ENSMUSP00000090651"/>
<dbReference type="PeptideAtlas" id="Q8CB62"/>
<dbReference type="ProteomicsDB" id="285526">
    <molecule id="Q8CB62-1"/>
</dbReference>
<dbReference type="ProteomicsDB" id="285527">
    <molecule id="Q8CB62-2"/>
</dbReference>
<dbReference type="Pumba" id="Q8CB62"/>
<dbReference type="Antibodypedia" id="12323">
    <property type="antibodies" value="205 antibodies from 28 providers"/>
</dbReference>
<dbReference type="DNASU" id="216846"/>
<dbReference type="Ensembl" id="ENSMUST00000092973.6">
    <molecule id="Q8CB62-1"/>
    <property type="protein sequence ID" value="ENSMUSP00000090651.6"/>
    <property type="gene ID" value="ENSMUSG00000032782.20"/>
</dbReference>
<dbReference type="GeneID" id="216846"/>
<dbReference type="KEGG" id="mmu:216846"/>
<dbReference type="UCSC" id="uc007jpp.1">
    <molecule id="Q8CB62-1"/>
    <property type="organism name" value="mouse"/>
</dbReference>
<dbReference type="AGR" id="MGI:2443290"/>
<dbReference type="CTD" id="116840"/>
<dbReference type="MGI" id="MGI:2443290">
    <property type="gene designation" value="Cntrob"/>
</dbReference>
<dbReference type="VEuPathDB" id="HostDB:ENSMUSG00000032782"/>
<dbReference type="eggNOG" id="ENOG502QRRG">
    <property type="taxonomic scope" value="Eukaryota"/>
</dbReference>
<dbReference type="GeneTree" id="ENSGT00610000086191"/>
<dbReference type="HOGENOM" id="CLU_344733_0_0_1"/>
<dbReference type="InParanoid" id="Q8CB62"/>
<dbReference type="OMA" id="HSGYQPG"/>
<dbReference type="OrthoDB" id="8190486at2759"/>
<dbReference type="PhylomeDB" id="Q8CB62"/>
<dbReference type="TreeFam" id="TF337444"/>
<dbReference type="BioGRID-ORCS" id="216846">
    <property type="hits" value="5 hits in 75 CRISPR screens"/>
</dbReference>
<dbReference type="PRO" id="PR:Q8CB62"/>
<dbReference type="Proteomes" id="UP000000589">
    <property type="component" value="Chromosome 11"/>
</dbReference>
<dbReference type="RNAct" id="Q8CB62">
    <property type="molecule type" value="protein"/>
</dbReference>
<dbReference type="Bgee" id="ENSMUSG00000032782">
    <property type="expression patterns" value="Expressed in skin of snout and 259 other cell types or tissues"/>
</dbReference>
<dbReference type="ExpressionAtlas" id="Q8CB62">
    <property type="expression patterns" value="baseline and differential"/>
</dbReference>
<dbReference type="GO" id="GO:0005814">
    <property type="term" value="C:centriole"/>
    <property type="evidence" value="ECO:0000250"/>
    <property type="project" value="HGNC-UCL"/>
</dbReference>
<dbReference type="GO" id="GO:0005813">
    <property type="term" value="C:centrosome"/>
    <property type="evidence" value="ECO:0007669"/>
    <property type="project" value="Ensembl"/>
</dbReference>
<dbReference type="GO" id="GO:0036064">
    <property type="term" value="C:ciliary basal body"/>
    <property type="evidence" value="ECO:0007669"/>
    <property type="project" value="Ensembl"/>
</dbReference>
<dbReference type="GO" id="GO:0005829">
    <property type="term" value="C:cytosol"/>
    <property type="evidence" value="ECO:0007669"/>
    <property type="project" value="Ensembl"/>
</dbReference>
<dbReference type="GO" id="GO:0019904">
    <property type="term" value="F:protein domain specific binding"/>
    <property type="evidence" value="ECO:0007669"/>
    <property type="project" value="Ensembl"/>
</dbReference>
<dbReference type="GO" id="GO:0007099">
    <property type="term" value="P:centriole replication"/>
    <property type="evidence" value="ECO:0000250"/>
    <property type="project" value="HGNC-UCL"/>
</dbReference>
<dbReference type="GO" id="GO:0051299">
    <property type="term" value="P:centrosome separation"/>
    <property type="evidence" value="ECO:0000250"/>
    <property type="project" value="HGNC-UCL"/>
</dbReference>
<dbReference type="GO" id="GO:1902410">
    <property type="term" value="P:mitotic cytokinetic process"/>
    <property type="evidence" value="ECO:0000250"/>
    <property type="project" value="HGNC"/>
</dbReference>
<dbReference type="GO" id="GO:1902017">
    <property type="term" value="P:regulation of cilium assembly"/>
    <property type="evidence" value="ECO:0007669"/>
    <property type="project" value="InterPro"/>
</dbReference>
<dbReference type="InterPro" id="IPR038923">
    <property type="entry name" value="Centrobin"/>
</dbReference>
<dbReference type="PANTHER" id="PTHR34439">
    <property type="entry name" value="CENTROBIN"/>
    <property type="match status" value="1"/>
</dbReference>
<dbReference type="PANTHER" id="PTHR34439:SF1">
    <property type="entry name" value="CENTROBIN"/>
    <property type="match status" value="1"/>
</dbReference>
<reference key="1">
    <citation type="journal article" date="2005" name="Science">
        <title>The transcriptional landscape of the mammalian genome.</title>
        <authorList>
            <person name="Carninci P."/>
            <person name="Kasukawa T."/>
            <person name="Katayama S."/>
            <person name="Gough J."/>
            <person name="Frith M.C."/>
            <person name="Maeda N."/>
            <person name="Oyama R."/>
            <person name="Ravasi T."/>
            <person name="Lenhard B."/>
            <person name="Wells C."/>
            <person name="Kodzius R."/>
            <person name="Shimokawa K."/>
            <person name="Bajic V.B."/>
            <person name="Brenner S.E."/>
            <person name="Batalov S."/>
            <person name="Forrest A.R."/>
            <person name="Zavolan M."/>
            <person name="Davis M.J."/>
            <person name="Wilming L.G."/>
            <person name="Aidinis V."/>
            <person name="Allen J.E."/>
            <person name="Ambesi-Impiombato A."/>
            <person name="Apweiler R."/>
            <person name="Aturaliya R.N."/>
            <person name="Bailey T.L."/>
            <person name="Bansal M."/>
            <person name="Baxter L."/>
            <person name="Beisel K.W."/>
            <person name="Bersano T."/>
            <person name="Bono H."/>
            <person name="Chalk A.M."/>
            <person name="Chiu K.P."/>
            <person name="Choudhary V."/>
            <person name="Christoffels A."/>
            <person name="Clutterbuck D.R."/>
            <person name="Crowe M.L."/>
            <person name="Dalla E."/>
            <person name="Dalrymple B.P."/>
            <person name="de Bono B."/>
            <person name="Della Gatta G."/>
            <person name="di Bernardo D."/>
            <person name="Down T."/>
            <person name="Engstrom P."/>
            <person name="Fagiolini M."/>
            <person name="Faulkner G."/>
            <person name="Fletcher C.F."/>
            <person name="Fukushima T."/>
            <person name="Furuno M."/>
            <person name="Futaki S."/>
            <person name="Gariboldi M."/>
            <person name="Georgii-Hemming P."/>
            <person name="Gingeras T.R."/>
            <person name="Gojobori T."/>
            <person name="Green R.E."/>
            <person name="Gustincich S."/>
            <person name="Harbers M."/>
            <person name="Hayashi Y."/>
            <person name="Hensch T.K."/>
            <person name="Hirokawa N."/>
            <person name="Hill D."/>
            <person name="Huminiecki L."/>
            <person name="Iacono M."/>
            <person name="Ikeo K."/>
            <person name="Iwama A."/>
            <person name="Ishikawa T."/>
            <person name="Jakt M."/>
            <person name="Kanapin A."/>
            <person name="Katoh M."/>
            <person name="Kawasawa Y."/>
            <person name="Kelso J."/>
            <person name="Kitamura H."/>
            <person name="Kitano H."/>
            <person name="Kollias G."/>
            <person name="Krishnan S.P."/>
            <person name="Kruger A."/>
            <person name="Kummerfeld S.K."/>
            <person name="Kurochkin I.V."/>
            <person name="Lareau L.F."/>
            <person name="Lazarevic D."/>
            <person name="Lipovich L."/>
            <person name="Liu J."/>
            <person name="Liuni S."/>
            <person name="McWilliam S."/>
            <person name="Madan Babu M."/>
            <person name="Madera M."/>
            <person name="Marchionni L."/>
            <person name="Matsuda H."/>
            <person name="Matsuzawa S."/>
            <person name="Miki H."/>
            <person name="Mignone F."/>
            <person name="Miyake S."/>
            <person name="Morris K."/>
            <person name="Mottagui-Tabar S."/>
            <person name="Mulder N."/>
            <person name="Nakano N."/>
            <person name="Nakauchi H."/>
            <person name="Ng P."/>
            <person name="Nilsson R."/>
            <person name="Nishiguchi S."/>
            <person name="Nishikawa S."/>
            <person name="Nori F."/>
            <person name="Ohara O."/>
            <person name="Okazaki Y."/>
            <person name="Orlando V."/>
            <person name="Pang K.C."/>
            <person name="Pavan W.J."/>
            <person name="Pavesi G."/>
            <person name="Pesole G."/>
            <person name="Petrovsky N."/>
            <person name="Piazza S."/>
            <person name="Reed J."/>
            <person name="Reid J.F."/>
            <person name="Ring B.Z."/>
            <person name="Ringwald M."/>
            <person name="Rost B."/>
            <person name="Ruan Y."/>
            <person name="Salzberg S.L."/>
            <person name="Sandelin A."/>
            <person name="Schneider C."/>
            <person name="Schoenbach C."/>
            <person name="Sekiguchi K."/>
            <person name="Semple C.A."/>
            <person name="Seno S."/>
            <person name="Sessa L."/>
            <person name="Sheng Y."/>
            <person name="Shibata Y."/>
            <person name="Shimada H."/>
            <person name="Shimada K."/>
            <person name="Silva D."/>
            <person name="Sinclair B."/>
            <person name="Sperling S."/>
            <person name="Stupka E."/>
            <person name="Sugiura K."/>
            <person name="Sultana R."/>
            <person name="Takenaka Y."/>
            <person name="Taki K."/>
            <person name="Tammoja K."/>
            <person name="Tan S.L."/>
            <person name="Tang S."/>
            <person name="Taylor M.S."/>
            <person name="Tegner J."/>
            <person name="Teichmann S.A."/>
            <person name="Ueda H.R."/>
            <person name="van Nimwegen E."/>
            <person name="Verardo R."/>
            <person name="Wei C.L."/>
            <person name="Yagi K."/>
            <person name="Yamanishi H."/>
            <person name="Zabarovsky E."/>
            <person name="Zhu S."/>
            <person name="Zimmer A."/>
            <person name="Hide W."/>
            <person name="Bult C."/>
            <person name="Grimmond S.M."/>
            <person name="Teasdale R.D."/>
            <person name="Liu E.T."/>
            <person name="Brusic V."/>
            <person name="Quackenbush J."/>
            <person name="Wahlestedt C."/>
            <person name="Mattick J.S."/>
            <person name="Hume D.A."/>
            <person name="Kai C."/>
            <person name="Sasaki D."/>
            <person name="Tomaru Y."/>
            <person name="Fukuda S."/>
            <person name="Kanamori-Katayama M."/>
            <person name="Suzuki M."/>
            <person name="Aoki J."/>
            <person name="Arakawa T."/>
            <person name="Iida J."/>
            <person name="Imamura K."/>
            <person name="Itoh M."/>
            <person name="Kato T."/>
            <person name="Kawaji H."/>
            <person name="Kawagashira N."/>
            <person name="Kawashima T."/>
            <person name="Kojima M."/>
            <person name="Kondo S."/>
            <person name="Konno H."/>
            <person name="Nakano K."/>
            <person name="Ninomiya N."/>
            <person name="Nishio T."/>
            <person name="Okada M."/>
            <person name="Plessy C."/>
            <person name="Shibata K."/>
            <person name="Shiraki T."/>
            <person name="Suzuki S."/>
            <person name="Tagami M."/>
            <person name="Waki K."/>
            <person name="Watahiki A."/>
            <person name="Okamura-Oho Y."/>
            <person name="Suzuki H."/>
            <person name="Kawai J."/>
            <person name="Hayashizaki Y."/>
        </authorList>
    </citation>
    <scope>NUCLEOTIDE SEQUENCE [LARGE SCALE MRNA] (ISOFORM 2)</scope>
    <source>
        <strain>C57BL/6J</strain>
        <tissue>Bone</tissue>
    </source>
</reference>
<reference key="2">
    <citation type="journal article" date="2009" name="PLoS Biol.">
        <title>Lineage-specific biology revealed by a finished genome assembly of the mouse.</title>
        <authorList>
            <person name="Church D.M."/>
            <person name="Goodstadt L."/>
            <person name="Hillier L.W."/>
            <person name="Zody M.C."/>
            <person name="Goldstein S."/>
            <person name="She X."/>
            <person name="Bult C.J."/>
            <person name="Agarwala R."/>
            <person name="Cherry J.L."/>
            <person name="DiCuccio M."/>
            <person name="Hlavina W."/>
            <person name="Kapustin Y."/>
            <person name="Meric P."/>
            <person name="Maglott D."/>
            <person name="Birtle Z."/>
            <person name="Marques A.C."/>
            <person name="Graves T."/>
            <person name="Zhou S."/>
            <person name="Teague B."/>
            <person name="Potamousis K."/>
            <person name="Churas C."/>
            <person name="Place M."/>
            <person name="Herschleb J."/>
            <person name="Runnheim R."/>
            <person name="Forrest D."/>
            <person name="Amos-Landgraf J."/>
            <person name="Schwartz D.C."/>
            <person name="Cheng Z."/>
            <person name="Lindblad-Toh K."/>
            <person name="Eichler E.E."/>
            <person name="Ponting C.P."/>
        </authorList>
    </citation>
    <scope>NUCLEOTIDE SEQUENCE [LARGE SCALE GENOMIC DNA]</scope>
    <source>
        <strain>C57BL/6J</strain>
    </source>
</reference>
<reference key="3">
    <citation type="journal article" date="2004" name="Genome Res.">
        <title>The status, quality, and expansion of the NIH full-length cDNA project: the Mammalian Gene Collection (MGC).</title>
        <authorList>
            <consortium name="The MGC Project Team"/>
        </authorList>
    </citation>
    <scope>NUCLEOTIDE SEQUENCE [LARGE SCALE MRNA] OF 87-887 (ISOFORM 1)</scope>
    <source>
        <strain>C57BL/6J</strain>
        <tissue>Brain</tissue>
    </source>
</reference>
<keyword id="KW-0025">Alternative splicing</keyword>
<keyword id="KW-0131">Cell cycle</keyword>
<keyword id="KW-0132">Cell division</keyword>
<keyword id="KW-0175">Coiled coil</keyword>
<keyword id="KW-0963">Cytoplasm</keyword>
<keyword id="KW-0206">Cytoskeleton</keyword>
<keyword id="KW-0597">Phosphoprotein</keyword>
<keyword id="KW-1185">Reference proteome</keyword>
<feature type="chain" id="PRO_0000076241" description="Centrobin">
    <location>
        <begin position="1"/>
        <end position="887"/>
    </location>
</feature>
<feature type="region of interest" description="Disordered" evidence="4">
    <location>
        <begin position="1"/>
        <end position="34"/>
    </location>
</feature>
<feature type="region of interest" description="Disordered" evidence="4">
    <location>
        <begin position="110"/>
        <end position="153"/>
    </location>
</feature>
<feature type="region of interest" description="Required for centrosome localization" evidence="1">
    <location>
        <begin position="360"/>
        <end position="887"/>
    </location>
</feature>
<feature type="region of interest" description="Disordered" evidence="4">
    <location>
        <begin position="465"/>
        <end position="486"/>
    </location>
</feature>
<feature type="region of interest" description="Disordered" evidence="4">
    <location>
        <begin position="566"/>
        <end position="591"/>
    </location>
</feature>
<feature type="region of interest" description="Disordered" evidence="4">
    <location>
        <begin position="636"/>
        <end position="695"/>
    </location>
</feature>
<feature type="region of interest" description="Disordered" evidence="4">
    <location>
        <begin position="824"/>
        <end position="887"/>
    </location>
</feature>
<feature type="coiled-coil region" evidence="3">
    <location>
        <begin position="191"/>
        <end position="557"/>
    </location>
</feature>
<feature type="compositionally biased region" description="Basic and acidic residues" evidence="4">
    <location>
        <begin position="113"/>
        <end position="128"/>
    </location>
</feature>
<feature type="compositionally biased region" description="Polar residues" evidence="4">
    <location>
        <begin position="133"/>
        <end position="153"/>
    </location>
</feature>
<feature type="compositionally biased region" description="Basic and acidic residues" evidence="4">
    <location>
        <begin position="670"/>
        <end position="680"/>
    </location>
</feature>
<feature type="compositionally biased region" description="Basic and acidic residues" evidence="4">
    <location>
        <begin position="832"/>
        <end position="849"/>
    </location>
</feature>
<feature type="modified residue" description="Phosphoserine" evidence="2">
    <location>
        <position position="81"/>
    </location>
</feature>
<feature type="modified residue" description="Phosphoserine" evidence="2">
    <location>
        <position position="782"/>
    </location>
</feature>
<feature type="splice variant" id="VSP_016842" description="In isoform 2." evidence="5">
    <location>
        <begin position="1"/>
        <end position="225"/>
    </location>
</feature>
<protein>
    <recommendedName>
        <fullName>Centrobin</fullName>
    </recommendedName>
    <alternativeName>
        <fullName>Centrosomal BRCA2-interacting protein</fullName>
    </alternativeName>
    <alternativeName>
        <fullName>LYST-interacting protein 8</fullName>
    </alternativeName>
</protein>
<accession>Q8CB62</accession>
<accession>B0QZN4</accession>
<accession>Q5NCF3</accession>
<organism>
    <name type="scientific">Mus musculus</name>
    <name type="common">Mouse</name>
    <dbReference type="NCBI Taxonomy" id="10090"/>
    <lineage>
        <taxon>Eukaryota</taxon>
        <taxon>Metazoa</taxon>
        <taxon>Chordata</taxon>
        <taxon>Craniata</taxon>
        <taxon>Vertebrata</taxon>
        <taxon>Euteleostomi</taxon>
        <taxon>Mammalia</taxon>
        <taxon>Eutheria</taxon>
        <taxon>Euarchontoglires</taxon>
        <taxon>Glires</taxon>
        <taxon>Rodentia</taxon>
        <taxon>Myomorpha</taxon>
        <taxon>Muroidea</taxon>
        <taxon>Muridae</taxon>
        <taxon>Murinae</taxon>
        <taxon>Mus</taxon>
        <taxon>Mus</taxon>
    </lineage>
</organism>
<name>CNTRB_MOUSE</name>
<sequence>MATAAPSPSSPLRPEDLLSDSSEPPGLNQVSSEVTSQLYTSLHLSRQAEATARAQLYLAPTSSPPNEGLDSLAQELSRSLSVGLENNLKKKDGSKHIFEMESVRGQLQTMLHTSRDTAYRTGSERREEDSFDSDSTATLLNTRPLQDLSPSSSAPALEELFPRYTSLRPGPPTNPPDFQGLRDALDAELTRRKHCERHIQSLQTRVLELQQQLAVAVAADHKKDLMIEQLDKTLARVVEGWNRHEAERTEVLRGLQEERQAAELTRSKQQETVTRLEQSLSEAMEALSREQEGARLQQREKEALEEERQALTLRLEVEQQQCRTLQEERDEARAGQLSEHRKLEALQVALQEERQAWIKQEHQLKERLQALQEEGQAQLEREKGNSQREAQAAWETQQQFALLQTEVRRLEGDLDTVRRERDALQLEMSLVQARYESQRIQMESELAVQLEQRVTERLAEAQENSLRQAASLRDHHRKQLQELSGQHQQELAAQLAQFKVEMADREERQQQVAQDYELRLAREQARVRDLKSGNQQLEEQRAELVERLQAMLQAHWEEANQLLSTTLLPPNPQAPLAEPSSPGPLEPEKGERRTWAMPPMAVALKPVLQQSREVKGDVPGAPSVLCSTSPDLSLLLGPPFQNQNSFQPLEPKPDVTPPTAGPFSALEAFTDDHRAERPFPEEDPGSDGDARLPPASQLEGLKNFLQQLLETAPQSNGNPSADLLLPKAGSRAVSSWEEAPQVPRLPPPVHKTKVPLAMASSLFRVHGLPSTNLQGSGLSTGSPEKDGLNLVDVSELLRLYQARGWGALPAEDLLLYLKRLEHSGTDGQGELVPRRNTDSRLGETTRKEIPSQAVPRRLASVPKTEKPARKKSGHPGPSMRSRGGIWR</sequence>